<sequence>MKLNEIKDNEGSSKDRIRVGRGIGSGKGKTGGRGVKGQKARSGVAVNGFEGGQMPIYRRLPKRGFNNIFASEFTTVSLGRIQTAIDAGKLDASATIDAAALKAAGVIRRLKDGVRVLGDGELTTKVTIEVAGASKPAVEKIEKAGGTIKQLSAAAEKSE</sequence>
<keyword id="KW-1185">Reference proteome</keyword>
<keyword id="KW-0687">Ribonucleoprotein</keyword>
<keyword id="KW-0689">Ribosomal protein</keyword>
<keyword id="KW-0694">RNA-binding</keyword>
<keyword id="KW-0699">rRNA-binding</keyword>
<organism>
    <name type="scientific">Allorhizobium ampelinum (strain ATCC BAA-846 / DSM 112012 / S4)</name>
    <name type="common">Agrobacterium vitis (strain S4)</name>
    <dbReference type="NCBI Taxonomy" id="311402"/>
    <lineage>
        <taxon>Bacteria</taxon>
        <taxon>Pseudomonadati</taxon>
        <taxon>Pseudomonadota</taxon>
        <taxon>Alphaproteobacteria</taxon>
        <taxon>Hyphomicrobiales</taxon>
        <taxon>Rhizobiaceae</taxon>
        <taxon>Rhizobium/Agrobacterium group</taxon>
        <taxon>Allorhizobium</taxon>
        <taxon>Allorhizobium ampelinum</taxon>
    </lineage>
</organism>
<name>RL15_ALLAM</name>
<gene>
    <name evidence="1" type="primary">rplO</name>
    <name type="ordered locus">Avi_1862</name>
</gene>
<comment type="function">
    <text evidence="1">Binds to the 23S rRNA.</text>
</comment>
<comment type="subunit">
    <text evidence="1">Part of the 50S ribosomal subunit.</text>
</comment>
<comment type="similarity">
    <text evidence="1">Belongs to the universal ribosomal protein uL15 family.</text>
</comment>
<evidence type="ECO:0000255" key="1">
    <source>
        <dbReference type="HAMAP-Rule" id="MF_01341"/>
    </source>
</evidence>
<evidence type="ECO:0000256" key="2">
    <source>
        <dbReference type="SAM" id="MobiDB-lite"/>
    </source>
</evidence>
<evidence type="ECO:0000305" key="3"/>
<feature type="chain" id="PRO_1000166268" description="Large ribosomal subunit protein uL15">
    <location>
        <begin position="1"/>
        <end position="159"/>
    </location>
</feature>
<feature type="region of interest" description="Disordered" evidence="2">
    <location>
        <begin position="1"/>
        <end position="39"/>
    </location>
</feature>
<feature type="compositionally biased region" description="Basic and acidic residues" evidence="2">
    <location>
        <begin position="1"/>
        <end position="18"/>
    </location>
</feature>
<feature type="compositionally biased region" description="Gly residues" evidence="2">
    <location>
        <begin position="21"/>
        <end position="35"/>
    </location>
</feature>
<accession>B9JVQ6</accession>
<reference key="1">
    <citation type="journal article" date="2009" name="J. Bacteriol.">
        <title>Genome sequences of three Agrobacterium biovars help elucidate the evolution of multichromosome genomes in bacteria.</title>
        <authorList>
            <person name="Slater S.C."/>
            <person name="Goldman B.S."/>
            <person name="Goodner B."/>
            <person name="Setubal J.C."/>
            <person name="Farrand S.K."/>
            <person name="Nester E.W."/>
            <person name="Burr T.J."/>
            <person name="Banta L."/>
            <person name="Dickerman A.W."/>
            <person name="Paulsen I."/>
            <person name="Otten L."/>
            <person name="Suen G."/>
            <person name="Welch R."/>
            <person name="Almeida N.F."/>
            <person name="Arnold F."/>
            <person name="Burton O.T."/>
            <person name="Du Z."/>
            <person name="Ewing A."/>
            <person name="Godsy E."/>
            <person name="Heisel S."/>
            <person name="Houmiel K.L."/>
            <person name="Jhaveri J."/>
            <person name="Lu J."/>
            <person name="Miller N.M."/>
            <person name="Norton S."/>
            <person name="Chen Q."/>
            <person name="Phoolcharoen W."/>
            <person name="Ohlin V."/>
            <person name="Ondrusek D."/>
            <person name="Pride N."/>
            <person name="Stricklin S.L."/>
            <person name="Sun J."/>
            <person name="Wheeler C."/>
            <person name="Wilson L."/>
            <person name="Zhu H."/>
            <person name="Wood D.W."/>
        </authorList>
    </citation>
    <scope>NUCLEOTIDE SEQUENCE [LARGE SCALE GENOMIC DNA]</scope>
    <source>
        <strain>ATCC BAA-846 / DSM 112012 / S4</strain>
    </source>
</reference>
<proteinExistence type="inferred from homology"/>
<protein>
    <recommendedName>
        <fullName evidence="1">Large ribosomal subunit protein uL15</fullName>
    </recommendedName>
    <alternativeName>
        <fullName evidence="3">50S ribosomal protein L15</fullName>
    </alternativeName>
</protein>
<dbReference type="EMBL" id="CP000633">
    <property type="protein sequence ID" value="ACM36336.1"/>
    <property type="molecule type" value="Genomic_DNA"/>
</dbReference>
<dbReference type="RefSeq" id="WP_015915757.1">
    <property type="nucleotide sequence ID" value="NC_011989.1"/>
</dbReference>
<dbReference type="SMR" id="B9JVQ6"/>
<dbReference type="STRING" id="311402.Avi_1862"/>
<dbReference type="GeneID" id="60682422"/>
<dbReference type="KEGG" id="avi:Avi_1862"/>
<dbReference type="eggNOG" id="COG0200">
    <property type="taxonomic scope" value="Bacteria"/>
</dbReference>
<dbReference type="HOGENOM" id="CLU_055188_4_0_5"/>
<dbReference type="Proteomes" id="UP000001596">
    <property type="component" value="Chromosome 1"/>
</dbReference>
<dbReference type="GO" id="GO:0022625">
    <property type="term" value="C:cytosolic large ribosomal subunit"/>
    <property type="evidence" value="ECO:0007669"/>
    <property type="project" value="TreeGrafter"/>
</dbReference>
<dbReference type="GO" id="GO:0019843">
    <property type="term" value="F:rRNA binding"/>
    <property type="evidence" value="ECO:0007669"/>
    <property type="project" value="UniProtKB-UniRule"/>
</dbReference>
<dbReference type="GO" id="GO:0003735">
    <property type="term" value="F:structural constituent of ribosome"/>
    <property type="evidence" value="ECO:0007669"/>
    <property type="project" value="InterPro"/>
</dbReference>
<dbReference type="GO" id="GO:0006412">
    <property type="term" value="P:translation"/>
    <property type="evidence" value="ECO:0007669"/>
    <property type="project" value="UniProtKB-UniRule"/>
</dbReference>
<dbReference type="Gene3D" id="3.100.10.10">
    <property type="match status" value="1"/>
</dbReference>
<dbReference type="HAMAP" id="MF_01341">
    <property type="entry name" value="Ribosomal_uL15"/>
    <property type="match status" value="1"/>
</dbReference>
<dbReference type="InterPro" id="IPR030878">
    <property type="entry name" value="Ribosomal_uL15"/>
</dbReference>
<dbReference type="InterPro" id="IPR021131">
    <property type="entry name" value="Ribosomal_uL15/eL18"/>
</dbReference>
<dbReference type="InterPro" id="IPR036227">
    <property type="entry name" value="Ribosomal_uL15/eL18_sf"/>
</dbReference>
<dbReference type="InterPro" id="IPR005749">
    <property type="entry name" value="Ribosomal_uL15_bac-type"/>
</dbReference>
<dbReference type="InterPro" id="IPR001196">
    <property type="entry name" value="Ribosomal_uL15_CS"/>
</dbReference>
<dbReference type="NCBIfam" id="TIGR01071">
    <property type="entry name" value="rplO_bact"/>
    <property type="match status" value="1"/>
</dbReference>
<dbReference type="PANTHER" id="PTHR12934">
    <property type="entry name" value="50S RIBOSOMAL PROTEIN L15"/>
    <property type="match status" value="1"/>
</dbReference>
<dbReference type="PANTHER" id="PTHR12934:SF11">
    <property type="entry name" value="LARGE RIBOSOMAL SUBUNIT PROTEIN UL15M"/>
    <property type="match status" value="1"/>
</dbReference>
<dbReference type="Pfam" id="PF00828">
    <property type="entry name" value="Ribosomal_L27A"/>
    <property type="match status" value="1"/>
</dbReference>
<dbReference type="SUPFAM" id="SSF52080">
    <property type="entry name" value="Ribosomal proteins L15p and L18e"/>
    <property type="match status" value="1"/>
</dbReference>
<dbReference type="PROSITE" id="PS00475">
    <property type="entry name" value="RIBOSOMAL_L15"/>
    <property type="match status" value="1"/>
</dbReference>